<reference key="1">
    <citation type="submission" date="1994-05" db="EMBL/GenBank/DDBJ databases">
        <authorList>
            <person name="Daniel R."/>
            <person name="Gottschalk G."/>
        </authorList>
    </citation>
    <scope>NUCLEOTIDE SEQUENCE [GENOMIC DNA]</scope>
    <source>
        <strain>ATCC 6750 / DSM 30040 / NCIB 8173 / M8BK</strain>
    </source>
</reference>
<feature type="chain" id="PRO_0000066194" description="Probable glycerol dehydratase-reactivating factor small subunit">
    <location>
        <begin position="1"/>
        <end position="117"/>
    </location>
</feature>
<feature type="binding site" evidence="1">
    <location>
        <position position="31"/>
    </location>
    <ligand>
        <name>Mg(2+)</name>
        <dbReference type="ChEBI" id="CHEBI:18420"/>
    </ligand>
</feature>
<proteinExistence type="inferred from homology"/>
<organism>
    <name type="scientific">Citrobacter freundii</name>
    <dbReference type="NCBI Taxonomy" id="546"/>
    <lineage>
        <taxon>Bacteria</taxon>
        <taxon>Pseudomonadati</taxon>
        <taxon>Pseudomonadota</taxon>
        <taxon>Gammaproteobacteria</taxon>
        <taxon>Enterobacterales</taxon>
        <taxon>Enterobacteriaceae</taxon>
        <taxon>Citrobacter</taxon>
        <taxon>Citrobacter freundii complex</taxon>
    </lineage>
</organism>
<gene>
    <name evidence="2" type="primary">dhaG</name>
</gene>
<dbReference type="EMBL" id="U09771">
    <property type="protein sequence ID" value="AAB48847.1"/>
    <property type="molecule type" value="Genomic_DNA"/>
</dbReference>
<dbReference type="SMR" id="P45516"/>
<dbReference type="STRING" id="1333848.CFNIH1_02625"/>
<dbReference type="GO" id="GO:0046872">
    <property type="term" value="F:metal ion binding"/>
    <property type="evidence" value="ECO:0007669"/>
    <property type="project" value="UniProtKB-KW"/>
</dbReference>
<dbReference type="Gene3D" id="3.40.50.10150">
    <property type="entry name" value="B12-dependent dehydatase associated subunit"/>
    <property type="match status" value="1"/>
</dbReference>
<dbReference type="InterPro" id="IPR010254">
    <property type="entry name" value="B12-dep_deHydtase_bsu"/>
</dbReference>
<dbReference type="InterPro" id="IPR003208">
    <property type="entry name" value="Dehydtase/Dehydtase_re"/>
</dbReference>
<dbReference type="InterPro" id="IPR009192">
    <property type="entry name" value="Diol/glycerol_deHydtase_re_ssu"/>
</dbReference>
<dbReference type="Pfam" id="PF02288">
    <property type="entry name" value="Dehydratase_MU"/>
    <property type="match status" value="1"/>
</dbReference>
<dbReference type="PIRSF" id="PIRSF011503">
    <property type="entry name" value="DdrB_PduH"/>
    <property type="match status" value="1"/>
</dbReference>
<dbReference type="SUPFAM" id="SSF52968">
    <property type="entry name" value="B12-dependent dehydatase associated subunit"/>
    <property type="match status" value="1"/>
</dbReference>
<accession>P45516</accession>
<sequence length="117" mass="12479">MSLSSPGVHLFYHSRWQGTRVLDELCWGLEEQGVPCRAICCDDHDCALALGKLAAKSSTLRVGLGLNATGDIALTHAQLPEDRALVCGHTRAGTAQIRTLGANAGQLVKVLPFSEIK</sequence>
<comment type="function">
    <text evidence="1">Small subunit of the glycerol dehydratase-reactivating factor (GDR), which reactivates suicidally inhibited adenosylcobalamin-dependent glycerol dehydratase.</text>
</comment>
<comment type="cofactor">
    <cofactor evidence="1">
        <name>Mg(2+)</name>
        <dbReference type="ChEBI" id="CHEBI:18420"/>
    </cofactor>
</comment>
<comment type="subunit">
    <text evidence="1 3">Member of the GDR complex, probably composed of DhaF(2)/DhaG(2).</text>
</comment>
<comment type="similarity">
    <text evidence="3">Belongs to the DdrB/PduH family.</text>
</comment>
<evidence type="ECO:0000250" key="1">
    <source>
        <dbReference type="UniProtKB" id="O68196"/>
    </source>
</evidence>
<evidence type="ECO:0000303" key="2">
    <source ref="1"/>
</evidence>
<evidence type="ECO:0000305" key="3"/>
<name>DHAG_CITFR</name>
<protein>
    <recommendedName>
        <fullName evidence="2 3">Probable glycerol dehydratase-reactivating factor small subunit</fullName>
    </recommendedName>
    <alternativeName>
        <fullName>ORFX</fullName>
    </alternativeName>
</protein>
<keyword id="KW-0143">Chaperone</keyword>
<keyword id="KW-0460">Magnesium</keyword>
<keyword id="KW-0479">Metal-binding</keyword>